<gene>
    <name evidence="1" type="primary">metAS</name>
    <name type="ordered locus">Shewmr4_2598</name>
</gene>
<accession>Q0HGZ8</accession>
<reference key="1">
    <citation type="submission" date="2006-08" db="EMBL/GenBank/DDBJ databases">
        <title>Complete sequence of Shewanella sp. MR-4.</title>
        <authorList>
            <consortium name="US DOE Joint Genome Institute"/>
            <person name="Copeland A."/>
            <person name="Lucas S."/>
            <person name="Lapidus A."/>
            <person name="Barry K."/>
            <person name="Detter J.C."/>
            <person name="Glavina del Rio T."/>
            <person name="Hammon N."/>
            <person name="Israni S."/>
            <person name="Dalin E."/>
            <person name="Tice H."/>
            <person name="Pitluck S."/>
            <person name="Kiss H."/>
            <person name="Brettin T."/>
            <person name="Bruce D."/>
            <person name="Han C."/>
            <person name="Tapia R."/>
            <person name="Gilna P."/>
            <person name="Schmutz J."/>
            <person name="Larimer F."/>
            <person name="Land M."/>
            <person name="Hauser L."/>
            <person name="Kyrpides N."/>
            <person name="Mikhailova N."/>
            <person name="Nealson K."/>
            <person name="Konstantinidis K."/>
            <person name="Klappenbach J."/>
            <person name="Tiedje J."/>
            <person name="Richardson P."/>
        </authorList>
    </citation>
    <scope>NUCLEOTIDE SEQUENCE [LARGE SCALE GENOMIC DNA]</scope>
    <source>
        <strain>MR-4</strain>
    </source>
</reference>
<sequence length="313" mass="36525">MPVKIPDHLPAAGILESENIFVMSETRAANQDIRPMKVLILNLMPNKIETETQLLRLLGNTPLQVDVDLLRIHDKESKHTSIDHMNTFYRDFEDVRHKNYDGLIITGAPLGQIDFEEVTYWDHIREIIDWSQQHVTSVLFLCWAAHAGLYHLYGLNRKILQQKRSGVFVHRRTCQHFPLLRGFDDEFFAPHSRFAEMDIEELKQHPELQVLAESDEAGAYLVLSRNNRNLFVMGHPEYQKSTLNDEYHRDLAQGLNPNVPQNYYRNDDPQADAIARWHSHGSLLVSNWLNYYVYQLTPYDLSDMTAMTPWESQ</sequence>
<dbReference type="EC" id="2.3.1.46" evidence="1"/>
<dbReference type="EMBL" id="CP000446">
    <property type="protein sequence ID" value="ABI39669.1"/>
    <property type="molecule type" value="Genomic_DNA"/>
</dbReference>
<dbReference type="RefSeq" id="WP_011623350.1">
    <property type="nucleotide sequence ID" value="NC_008321.1"/>
</dbReference>
<dbReference type="SMR" id="Q0HGZ8"/>
<dbReference type="KEGG" id="she:Shewmr4_2598"/>
<dbReference type="HOGENOM" id="CLU_057851_0_1_6"/>
<dbReference type="UniPathway" id="UPA00051">
    <property type="reaction ID" value="UER00075"/>
</dbReference>
<dbReference type="GO" id="GO:0005737">
    <property type="term" value="C:cytoplasm"/>
    <property type="evidence" value="ECO:0007669"/>
    <property type="project" value="UniProtKB-SubCell"/>
</dbReference>
<dbReference type="GO" id="GO:0004414">
    <property type="term" value="F:homoserine O-acetyltransferase activity"/>
    <property type="evidence" value="ECO:0007669"/>
    <property type="project" value="UniProtKB-UniRule"/>
</dbReference>
<dbReference type="GO" id="GO:0008899">
    <property type="term" value="F:homoserine O-succinyltransferase activity"/>
    <property type="evidence" value="ECO:0007669"/>
    <property type="project" value="UniProtKB-EC"/>
</dbReference>
<dbReference type="GO" id="GO:0019281">
    <property type="term" value="P:L-methionine biosynthetic process from homoserine via O-succinyl-L-homoserine and cystathionine"/>
    <property type="evidence" value="ECO:0007669"/>
    <property type="project" value="InterPro"/>
</dbReference>
<dbReference type="CDD" id="cd03131">
    <property type="entry name" value="GATase1_HTS"/>
    <property type="match status" value="1"/>
</dbReference>
<dbReference type="FunFam" id="3.40.50.880:FF:000004">
    <property type="entry name" value="Homoserine O-succinyltransferase"/>
    <property type="match status" value="1"/>
</dbReference>
<dbReference type="Gene3D" id="3.40.50.880">
    <property type="match status" value="1"/>
</dbReference>
<dbReference type="HAMAP" id="MF_00295">
    <property type="entry name" value="MetA_acyltransf"/>
    <property type="match status" value="1"/>
</dbReference>
<dbReference type="InterPro" id="IPR029062">
    <property type="entry name" value="Class_I_gatase-like"/>
</dbReference>
<dbReference type="InterPro" id="IPR005697">
    <property type="entry name" value="HST_MetA"/>
</dbReference>
<dbReference type="InterPro" id="IPR033752">
    <property type="entry name" value="MetA_family"/>
</dbReference>
<dbReference type="NCBIfam" id="TIGR01001">
    <property type="entry name" value="metA"/>
    <property type="match status" value="1"/>
</dbReference>
<dbReference type="PANTHER" id="PTHR20919">
    <property type="entry name" value="HOMOSERINE O-SUCCINYLTRANSFERASE"/>
    <property type="match status" value="1"/>
</dbReference>
<dbReference type="PANTHER" id="PTHR20919:SF0">
    <property type="entry name" value="HOMOSERINE O-SUCCINYLTRANSFERASE"/>
    <property type="match status" value="1"/>
</dbReference>
<dbReference type="Pfam" id="PF04204">
    <property type="entry name" value="HTS"/>
    <property type="match status" value="1"/>
</dbReference>
<dbReference type="PIRSF" id="PIRSF000450">
    <property type="entry name" value="H_ser_succinyltr"/>
    <property type="match status" value="1"/>
</dbReference>
<dbReference type="SUPFAM" id="SSF52317">
    <property type="entry name" value="Class I glutamine amidotransferase-like"/>
    <property type="match status" value="1"/>
</dbReference>
<comment type="function">
    <text evidence="1">Transfers a succinyl group from succinyl-CoA to L-homoserine, forming succinyl-L-homoserine.</text>
</comment>
<comment type="catalytic activity">
    <reaction evidence="1">
        <text>L-homoserine + succinyl-CoA = O-succinyl-L-homoserine + CoA</text>
        <dbReference type="Rhea" id="RHEA:22008"/>
        <dbReference type="ChEBI" id="CHEBI:57287"/>
        <dbReference type="ChEBI" id="CHEBI:57292"/>
        <dbReference type="ChEBI" id="CHEBI:57476"/>
        <dbReference type="ChEBI" id="CHEBI:57661"/>
        <dbReference type="EC" id="2.3.1.46"/>
    </reaction>
</comment>
<comment type="pathway">
    <text evidence="1">Amino-acid biosynthesis; L-methionine biosynthesis via de novo pathway; O-succinyl-L-homoserine from L-homoserine: step 1/1.</text>
</comment>
<comment type="subcellular location">
    <subcellularLocation>
        <location evidence="1">Cytoplasm</location>
    </subcellularLocation>
</comment>
<comment type="similarity">
    <text evidence="1">Belongs to the MetA family.</text>
</comment>
<evidence type="ECO:0000255" key="1">
    <source>
        <dbReference type="HAMAP-Rule" id="MF_00295"/>
    </source>
</evidence>
<protein>
    <recommendedName>
        <fullName evidence="1">Homoserine O-succinyltransferase</fullName>
        <shortName evidence="1">HST</shortName>
        <ecNumber evidence="1">2.3.1.46</ecNumber>
    </recommendedName>
    <alternativeName>
        <fullName evidence="1">Homoserine transsuccinylase</fullName>
        <shortName evidence="1">HTS</shortName>
    </alternativeName>
</protein>
<organism>
    <name type="scientific">Shewanella sp. (strain MR-4)</name>
    <dbReference type="NCBI Taxonomy" id="60480"/>
    <lineage>
        <taxon>Bacteria</taxon>
        <taxon>Pseudomonadati</taxon>
        <taxon>Pseudomonadota</taxon>
        <taxon>Gammaproteobacteria</taxon>
        <taxon>Alteromonadales</taxon>
        <taxon>Shewanellaceae</taxon>
        <taxon>Shewanella</taxon>
    </lineage>
</organism>
<feature type="chain" id="PRO_1000021840" description="Homoserine O-succinyltransferase">
    <location>
        <begin position="1"/>
        <end position="313"/>
    </location>
</feature>
<feature type="active site" description="Acyl-thioester intermediate" evidence="1">
    <location>
        <position position="142"/>
    </location>
</feature>
<feature type="active site" description="Proton acceptor" evidence="1">
    <location>
        <position position="235"/>
    </location>
</feature>
<feature type="active site" evidence="1">
    <location>
        <position position="237"/>
    </location>
</feature>
<feature type="binding site" evidence="1">
    <location>
        <position position="163"/>
    </location>
    <ligand>
        <name>substrate</name>
    </ligand>
</feature>
<feature type="binding site" evidence="1">
    <location>
        <position position="192"/>
    </location>
    <ligand>
        <name>substrate</name>
    </ligand>
</feature>
<feature type="binding site" evidence="1">
    <location>
        <position position="249"/>
    </location>
    <ligand>
        <name>substrate</name>
    </ligand>
</feature>
<feature type="site" description="Important for acyl-CoA specificity" evidence="1">
    <location>
        <position position="111"/>
    </location>
</feature>
<feature type="site" description="Important for substrate specificity" evidence="1">
    <location>
        <position position="192"/>
    </location>
</feature>
<proteinExistence type="inferred from homology"/>
<keyword id="KW-0012">Acyltransferase</keyword>
<keyword id="KW-0028">Amino-acid biosynthesis</keyword>
<keyword id="KW-0963">Cytoplasm</keyword>
<keyword id="KW-0486">Methionine biosynthesis</keyword>
<keyword id="KW-0808">Transferase</keyword>
<name>METAS_SHESM</name>